<evidence type="ECO:0000255" key="1">
    <source>
        <dbReference type="HAMAP-Rule" id="MF_00701"/>
    </source>
</evidence>
<proteinExistence type="inferred from homology"/>
<gene>
    <name evidence="1" type="primary">priL</name>
    <name type="synonym">priB</name>
    <name type="ordered locus">UNCMA_08520</name>
    <name type="ORF">RCIX2295</name>
</gene>
<feature type="chain" id="PRO_1000045514" description="DNA primase large subunit PriL">
    <location>
        <begin position="1"/>
        <end position="366"/>
    </location>
</feature>
<feature type="binding site" evidence="1">
    <location>
        <position position="227"/>
    </location>
    <ligand>
        <name>[4Fe-4S] cluster</name>
        <dbReference type="ChEBI" id="CHEBI:49883"/>
    </ligand>
</feature>
<feature type="binding site" evidence="1">
    <location>
        <position position="298"/>
    </location>
    <ligand>
        <name>[4Fe-4S] cluster</name>
        <dbReference type="ChEBI" id="CHEBI:49883"/>
    </ligand>
</feature>
<feature type="binding site" evidence="1">
    <location>
        <position position="307"/>
    </location>
    <ligand>
        <name>[4Fe-4S] cluster</name>
        <dbReference type="ChEBI" id="CHEBI:49883"/>
    </ligand>
</feature>
<feature type="binding site" evidence="1">
    <location>
        <position position="314"/>
    </location>
    <ligand>
        <name>[4Fe-4S] cluster</name>
        <dbReference type="ChEBI" id="CHEBI:49883"/>
    </ligand>
</feature>
<organism>
    <name type="scientific">Methanocella arvoryzae (strain DSM 22066 / NBRC 105507 / MRE50)</name>
    <dbReference type="NCBI Taxonomy" id="351160"/>
    <lineage>
        <taxon>Archaea</taxon>
        <taxon>Methanobacteriati</taxon>
        <taxon>Methanobacteriota</taxon>
        <taxon>Stenosarchaea group</taxon>
        <taxon>Methanomicrobia</taxon>
        <taxon>Methanocellales</taxon>
        <taxon>Methanocellaceae</taxon>
        <taxon>Methanocella</taxon>
    </lineage>
</organism>
<accession>Q0W2J3</accession>
<dbReference type="EMBL" id="AM114193">
    <property type="protein sequence ID" value="CAJ37400.1"/>
    <property type="molecule type" value="Genomic_DNA"/>
</dbReference>
<dbReference type="RefSeq" id="WP_012035181.1">
    <property type="nucleotide sequence ID" value="NC_009464.1"/>
</dbReference>
<dbReference type="STRING" id="351160.RCIX2295"/>
<dbReference type="GeneID" id="5143365"/>
<dbReference type="KEGG" id="rci:RCIX2295"/>
<dbReference type="PATRIC" id="fig|351160.9.peg.881"/>
<dbReference type="eggNOG" id="arCOG03013">
    <property type="taxonomic scope" value="Archaea"/>
</dbReference>
<dbReference type="OrthoDB" id="46081at2157"/>
<dbReference type="Proteomes" id="UP000000663">
    <property type="component" value="Chromosome"/>
</dbReference>
<dbReference type="GO" id="GO:1990077">
    <property type="term" value="C:primosome complex"/>
    <property type="evidence" value="ECO:0007669"/>
    <property type="project" value="UniProtKB-KW"/>
</dbReference>
<dbReference type="GO" id="GO:0051539">
    <property type="term" value="F:4 iron, 4 sulfur cluster binding"/>
    <property type="evidence" value="ECO:0007669"/>
    <property type="project" value="UniProtKB-UniRule"/>
</dbReference>
<dbReference type="GO" id="GO:0003899">
    <property type="term" value="F:DNA-directed RNA polymerase activity"/>
    <property type="evidence" value="ECO:0007669"/>
    <property type="project" value="InterPro"/>
</dbReference>
<dbReference type="GO" id="GO:0046872">
    <property type="term" value="F:metal ion binding"/>
    <property type="evidence" value="ECO:0007669"/>
    <property type="project" value="UniProtKB-KW"/>
</dbReference>
<dbReference type="GO" id="GO:0006270">
    <property type="term" value="P:DNA replication initiation"/>
    <property type="evidence" value="ECO:0007669"/>
    <property type="project" value="TreeGrafter"/>
</dbReference>
<dbReference type="GO" id="GO:0006269">
    <property type="term" value="P:DNA replication, synthesis of primer"/>
    <property type="evidence" value="ECO:0007669"/>
    <property type="project" value="UniProtKB-UniRule"/>
</dbReference>
<dbReference type="CDD" id="cd06560">
    <property type="entry name" value="PriL"/>
    <property type="match status" value="1"/>
</dbReference>
<dbReference type="HAMAP" id="MF_00701">
    <property type="entry name" value="DNA_primase_lrg_arc"/>
    <property type="match status" value="1"/>
</dbReference>
<dbReference type="InterPro" id="IPR007238">
    <property type="entry name" value="DNA_primase_lsu_euk/arc"/>
</dbReference>
<dbReference type="InterPro" id="IPR023642">
    <property type="entry name" value="DNA_primase_lsu_PriL"/>
</dbReference>
<dbReference type="NCBIfam" id="NF002588">
    <property type="entry name" value="PRK02249.1-2"/>
    <property type="match status" value="1"/>
</dbReference>
<dbReference type="PANTHER" id="PTHR10537">
    <property type="entry name" value="DNA PRIMASE LARGE SUBUNIT"/>
    <property type="match status" value="1"/>
</dbReference>
<dbReference type="PANTHER" id="PTHR10537:SF3">
    <property type="entry name" value="DNA PRIMASE LARGE SUBUNIT"/>
    <property type="match status" value="1"/>
</dbReference>
<dbReference type="Pfam" id="PF04104">
    <property type="entry name" value="DNA_primase_lrg"/>
    <property type="match status" value="1"/>
</dbReference>
<dbReference type="SUPFAM" id="SSF140914">
    <property type="entry name" value="PriB N-terminal domain-like"/>
    <property type="match status" value="1"/>
</dbReference>
<protein>
    <recommendedName>
        <fullName evidence="1">DNA primase large subunit PriL</fullName>
    </recommendedName>
</protein>
<sequence>MDAVGFAKYPFTQEALSYVRDRNYSMEDILQKPAYGQVRLRAKKRVLNSIKGDVQADDLLPDPERELLSYPVARMLVAMTEDQYLMKRFALWESKRAYTLLLDESDTGLMDVGRDFGITARAKDREFIIHFTDYLRYAAGLRNLEWKLINRKVVAGMVYVSRETFTRLLEEAVREKIQAGFGAKVPAEMKPVLEPYLAEIRESLDKLKSEKGLSGDGEVTQDSFPPCMKNLLADLQKGINLPHTARFALTSFLANIGLDKDAIMDLYRMAPDFREDLTHYQVQHITGGSGTEYTCPGCKTMMTYGNCIGKNKLCEYVTHPLSYYRKSQRRRAKEMAAAQAFKGSKDKAVDTVAENVHVETGNSPGN</sequence>
<reference key="1">
    <citation type="journal article" date="2006" name="Science">
        <title>Genome of rice cluster I archaea -- the key methane producers in the rice rhizosphere.</title>
        <authorList>
            <person name="Erkel C."/>
            <person name="Kube M."/>
            <person name="Reinhardt R."/>
            <person name="Liesack W."/>
        </authorList>
    </citation>
    <scope>NUCLEOTIDE SEQUENCE [LARGE SCALE GENOMIC DNA]</scope>
    <source>
        <strain>DSM 22066 / NBRC 105507 / MRE50</strain>
    </source>
</reference>
<comment type="function">
    <text evidence="1">Regulatory subunit of DNA primase, an RNA polymerase that catalyzes the synthesis of short RNA molecules used as primers for DNA polymerase during DNA replication. Stabilizes and modulates the activity of the small subunit, increasing the rate of DNA synthesis, and conferring RNA synthesis capability. The DNA polymerase activity may enable DNA primase to also catalyze primer extension after primer synthesis. May also play a role in DNA repair.</text>
</comment>
<comment type="cofactor">
    <cofactor evidence="1">
        <name>[4Fe-4S] cluster</name>
        <dbReference type="ChEBI" id="CHEBI:49883"/>
    </cofactor>
    <text evidence="1">Binds 1 [4Fe-4S] cluster.</text>
</comment>
<comment type="subunit">
    <text evidence="1">Heterodimer of a small subunit (PriS) and a large subunit (PriL).</text>
</comment>
<comment type="similarity">
    <text evidence="1">Belongs to the eukaryotic-type primase large subunit family.</text>
</comment>
<keyword id="KW-0004">4Fe-4S</keyword>
<keyword id="KW-0235">DNA replication</keyword>
<keyword id="KW-0408">Iron</keyword>
<keyword id="KW-0411">Iron-sulfur</keyword>
<keyword id="KW-0479">Metal-binding</keyword>
<keyword id="KW-0639">Primosome</keyword>
<keyword id="KW-1185">Reference proteome</keyword>
<name>PRIL_METAR</name>